<proteinExistence type="inferred from homology"/>
<comment type="function">
    <text evidence="1">Part of the Sec protein translocase complex. Interacts with the SecYEG preprotein conducting channel. Has a central role in coupling the hydrolysis of ATP to the transfer of proteins into and across the cell membrane, serving both as a receptor for the preprotein-SecB complex and as an ATP-driven molecular motor driving the stepwise translocation of polypeptide chains across the membrane.</text>
</comment>
<comment type="catalytic activity">
    <reaction evidence="1">
        <text>ATP + H2O + cellular proteinSide 1 = ADP + phosphate + cellular proteinSide 2.</text>
        <dbReference type="EC" id="7.4.2.8"/>
    </reaction>
</comment>
<comment type="cofactor">
    <cofactor evidence="1">
        <name>Zn(2+)</name>
        <dbReference type="ChEBI" id="CHEBI:29105"/>
    </cofactor>
    <text evidence="1">May bind 1 zinc ion per subunit.</text>
</comment>
<comment type="subunit">
    <text evidence="1">Monomer and homodimer. Part of the essential Sec protein translocation apparatus which comprises SecA, SecYEG and auxiliary proteins SecDF-YajC and YidC.</text>
</comment>
<comment type="subcellular location">
    <subcellularLocation>
        <location evidence="1">Cell inner membrane</location>
        <topology evidence="1">Peripheral membrane protein</topology>
        <orientation evidence="1">Cytoplasmic side</orientation>
    </subcellularLocation>
    <subcellularLocation>
        <location evidence="1">Cytoplasm</location>
    </subcellularLocation>
    <text evidence="1">Distribution is 50-50.</text>
</comment>
<comment type="similarity">
    <text evidence="1">Belongs to the SecA family.</text>
</comment>
<dbReference type="EC" id="7.4.2.8" evidence="1"/>
<dbReference type="EMBL" id="CP000563">
    <property type="protein sequence ID" value="ABN59942.1"/>
    <property type="molecule type" value="Genomic_DNA"/>
</dbReference>
<dbReference type="RefSeq" id="WP_011845622.1">
    <property type="nucleotide sequence ID" value="NC_009052.1"/>
</dbReference>
<dbReference type="SMR" id="A3CZM9"/>
<dbReference type="STRING" id="325240.Sbal_0410"/>
<dbReference type="KEGG" id="sbl:Sbal_0410"/>
<dbReference type="HOGENOM" id="CLU_005314_3_0_6"/>
<dbReference type="OrthoDB" id="9805579at2"/>
<dbReference type="Proteomes" id="UP000001557">
    <property type="component" value="Chromosome"/>
</dbReference>
<dbReference type="GO" id="GO:0031522">
    <property type="term" value="C:cell envelope Sec protein transport complex"/>
    <property type="evidence" value="ECO:0007669"/>
    <property type="project" value="TreeGrafter"/>
</dbReference>
<dbReference type="GO" id="GO:0005829">
    <property type="term" value="C:cytosol"/>
    <property type="evidence" value="ECO:0007669"/>
    <property type="project" value="TreeGrafter"/>
</dbReference>
<dbReference type="GO" id="GO:0005886">
    <property type="term" value="C:plasma membrane"/>
    <property type="evidence" value="ECO:0007669"/>
    <property type="project" value="UniProtKB-SubCell"/>
</dbReference>
<dbReference type="GO" id="GO:0005524">
    <property type="term" value="F:ATP binding"/>
    <property type="evidence" value="ECO:0007669"/>
    <property type="project" value="UniProtKB-UniRule"/>
</dbReference>
<dbReference type="GO" id="GO:0046872">
    <property type="term" value="F:metal ion binding"/>
    <property type="evidence" value="ECO:0007669"/>
    <property type="project" value="UniProtKB-KW"/>
</dbReference>
<dbReference type="GO" id="GO:0008564">
    <property type="term" value="F:protein-exporting ATPase activity"/>
    <property type="evidence" value="ECO:0007669"/>
    <property type="project" value="UniProtKB-EC"/>
</dbReference>
<dbReference type="GO" id="GO:0065002">
    <property type="term" value="P:intracellular protein transmembrane transport"/>
    <property type="evidence" value="ECO:0007669"/>
    <property type="project" value="UniProtKB-UniRule"/>
</dbReference>
<dbReference type="GO" id="GO:0017038">
    <property type="term" value="P:protein import"/>
    <property type="evidence" value="ECO:0007669"/>
    <property type="project" value="InterPro"/>
</dbReference>
<dbReference type="GO" id="GO:0006605">
    <property type="term" value="P:protein targeting"/>
    <property type="evidence" value="ECO:0007669"/>
    <property type="project" value="UniProtKB-UniRule"/>
</dbReference>
<dbReference type="GO" id="GO:0043952">
    <property type="term" value="P:protein transport by the Sec complex"/>
    <property type="evidence" value="ECO:0007669"/>
    <property type="project" value="TreeGrafter"/>
</dbReference>
<dbReference type="CDD" id="cd17928">
    <property type="entry name" value="DEXDc_SecA"/>
    <property type="match status" value="1"/>
</dbReference>
<dbReference type="CDD" id="cd18803">
    <property type="entry name" value="SF2_C_secA"/>
    <property type="match status" value="1"/>
</dbReference>
<dbReference type="FunFam" id="1.10.3060.10:FF:000001">
    <property type="entry name" value="Preprotein translocase subunit SecA"/>
    <property type="match status" value="1"/>
</dbReference>
<dbReference type="FunFam" id="3.40.50.300:FF:000081">
    <property type="entry name" value="Preprotein translocase subunit SecA"/>
    <property type="match status" value="1"/>
</dbReference>
<dbReference type="FunFam" id="3.40.50.300:FF:000113">
    <property type="entry name" value="Preprotein translocase subunit SecA"/>
    <property type="match status" value="1"/>
</dbReference>
<dbReference type="FunFam" id="3.90.1440.10:FF:000001">
    <property type="entry name" value="Preprotein translocase subunit SecA"/>
    <property type="match status" value="1"/>
</dbReference>
<dbReference type="Gene3D" id="1.10.3060.10">
    <property type="entry name" value="Helical scaffold and wing domains of SecA"/>
    <property type="match status" value="1"/>
</dbReference>
<dbReference type="Gene3D" id="3.40.50.300">
    <property type="entry name" value="P-loop containing nucleotide triphosphate hydrolases"/>
    <property type="match status" value="2"/>
</dbReference>
<dbReference type="Gene3D" id="3.90.1440.10">
    <property type="entry name" value="SecA, preprotein cross-linking domain"/>
    <property type="match status" value="1"/>
</dbReference>
<dbReference type="HAMAP" id="MF_01382">
    <property type="entry name" value="SecA"/>
    <property type="match status" value="1"/>
</dbReference>
<dbReference type="InterPro" id="IPR014001">
    <property type="entry name" value="Helicase_ATP-bd"/>
</dbReference>
<dbReference type="InterPro" id="IPR001650">
    <property type="entry name" value="Helicase_C-like"/>
</dbReference>
<dbReference type="InterPro" id="IPR027417">
    <property type="entry name" value="P-loop_NTPase"/>
</dbReference>
<dbReference type="InterPro" id="IPR004027">
    <property type="entry name" value="SEC_C_motif"/>
</dbReference>
<dbReference type="InterPro" id="IPR000185">
    <property type="entry name" value="SecA"/>
</dbReference>
<dbReference type="InterPro" id="IPR020937">
    <property type="entry name" value="SecA_CS"/>
</dbReference>
<dbReference type="InterPro" id="IPR011115">
    <property type="entry name" value="SecA_DEAD"/>
</dbReference>
<dbReference type="InterPro" id="IPR014018">
    <property type="entry name" value="SecA_motor_DEAD"/>
</dbReference>
<dbReference type="InterPro" id="IPR011130">
    <property type="entry name" value="SecA_preprotein_X-link_dom"/>
</dbReference>
<dbReference type="InterPro" id="IPR044722">
    <property type="entry name" value="SecA_SF2_C"/>
</dbReference>
<dbReference type="InterPro" id="IPR011116">
    <property type="entry name" value="SecA_Wing/Scaffold"/>
</dbReference>
<dbReference type="InterPro" id="IPR036266">
    <property type="entry name" value="SecA_Wing/Scaffold_sf"/>
</dbReference>
<dbReference type="InterPro" id="IPR036670">
    <property type="entry name" value="SecA_X-link_sf"/>
</dbReference>
<dbReference type="NCBIfam" id="NF009538">
    <property type="entry name" value="PRK12904.1"/>
    <property type="match status" value="1"/>
</dbReference>
<dbReference type="NCBIfam" id="TIGR00963">
    <property type="entry name" value="secA"/>
    <property type="match status" value="1"/>
</dbReference>
<dbReference type="PANTHER" id="PTHR30612:SF0">
    <property type="entry name" value="CHLOROPLAST PROTEIN-TRANSPORTING ATPASE"/>
    <property type="match status" value="1"/>
</dbReference>
<dbReference type="PANTHER" id="PTHR30612">
    <property type="entry name" value="SECA INNER MEMBRANE COMPONENT OF SEC PROTEIN SECRETION SYSTEM"/>
    <property type="match status" value="1"/>
</dbReference>
<dbReference type="Pfam" id="PF21090">
    <property type="entry name" value="P-loop_SecA"/>
    <property type="match status" value="1"/>
</dbReference>
<dbReference type="Pfam" id="PF02810">
    <property type="entry name" value="SEC-C"/>
    <property type="match status" value="1"/>
</dbReference>
<dbReference type="Pfam" id="PF07517">
    <property type="entry name" value="SecA_DEAD"/>
    <property type="match status" value="1"/>
</dbReference>
<dbReference type="Pfam" id="PF01043">
    <property type="entry name" value="SecA_PP_bind"/>
    <property type="match status" value="1"/>
</dbReference>
<dbReference type="Pfam" id="PF07516">
    <property type="entry name" value="SecA_SW"/>
    <property type="match status" value="1"/>
</dbReference>
<dbReference type="PRINTS" id="PR00906">
    <property type="entry name" value="SECA"/>
</dbReference>
<dbReference type="SMART" id="SM00957">
    <property type="entry name" value="SecA_DEAD"/>
    <property type="match status" value="1"/>
</dbReference>
<dbReference type="SMART" id="SM00958">
    <property type="entry name" value="SecA_PP_bind"/>
    <property type="match status" value="1"/>
</dbReference>
<dbReference type="SUPFAM" id="SSF81886">
    <property type="entry name" value="Helical scaffold and wing domains of SecA"/>
    <property type="match status" value="1"/>
</dbReference>
<dbReference type="SUPFAM" id="SSF52540">
    <property type="entry name" value="P-loop containing nucleoside triphosphate hydrolases"/>
    <property type="match status" value="2"/>
</dbReference>
<dbReference type="SUPFAM" id="SSF81767">
    <property type="entry name" value="Pre-protein crosslinking domain of SecA"/>
    <property type="match status" value="1"/>
</dbReference>
<dbReference type="PROSITE" id="PS01312">
    <property type="entry name" value="SECA"/>
    <property type="match status" value="1"/>
</dbReference>
<dbReference type="PROSITE" id="PS51196">
    <property type="entry name" value="SECA_MOTOR_DEAD"/>
    <property type="match status" value="1"/>
</dbReference>
<sequence>MFGKLLTKVFGSRNDRTLKGLQKIVISINALEADYEKLTDEALKAKTAEFRERLAAGASLDSIMAEAFATVREASKRVFDMRHFDVQLLGGMVLDSNRIAEMRTGEGKTLTATLPAYLNALTGKGVHVITVNDYLARRDAENNRPLFEFLGLTVGINVAGLGQHEKKAAYNADITYGTNNEFGFDYLRDNMAFSPQERVQRPLHYALIDEVDSILIDEARTPLIISGAAEDSSELYIKINTLIPNLIRQDKEDTEEYVGEGDYSIDEKAKQVHFTERGQEKVENLLIERGMLAEGDSLYSAANISLLHHVNAALRAHTLFERDVDYIVQDNEVIIVDEHTGRTMPGRRWSEGLHQAVEAKEGVHIQNENQTLASITFQNYFRQYEKLAGMTGTADTEAFEFQHIYGLDTVVVPTNRPMVRKDMADLVYLTADEKYQAIIKDIKDCRERGQPVLVGTVSIEQSELLARLMVQEKIPHEVLNAKFHEREAEIVAQAGRTGSVTIATNMAGRGTDIVLGGNWNMEIDELDNPTAEQKAKIKADWQIRHDEVVAAGGLHILGTERHESRRIDNQLRGRAGRQGDAGSSRFYLSMEDSLMRIFASDRVSGMMKKLGMEEGEAIEHPWVSRAIENAQRKVEARNFDIRKQLLEFDDVANDQRQVVYAQRNELMDAESIEDTIQNIQDDVIGAVIDQYIPPQSVEELWDIPGLEQRLHQEFMLKLPIQEWLDKEDDLHEESLRERIITAWGDAYKAKEEMVGAQVLRQFEKAVMLQTLDGLWKEHLAAMDHLRQGIHLRGYAQKNPKQEYKRESFELFQQLLNTLKHDVISVLSKVQVQAQSDVEEMEARRREEDAKIQRDYQHAAAESLVGSSDEHEAVTAQAPMIRDGEKVGRNDPCPCGSGRKYKQCHGKLS</sequence>
<keyword id="KW-0067">ATP-binding</keyword>
<keyword id="KW-0997">Cell inner membrane</keyword>
<keyword id="KW-1003">Cell membrane</keyword>
<keyword id="KW-0963">Cytoplasm</keyword>
<keyword id="KW-0472">Membrane</keyword>
<keyword id="KW-0479">Metal-binding</keyword>
<keyword id="KW-0547">Nucleotide-binding</keyword>
<keyword id="KW-0653">Protein transport</keyword>
<keyword id="KW-1185">Reference proteome</keyword>
<keyword id="KW-1278">Translocase</keyword>
<keyword id="KW-0811">Translocation</keyword>
<keyword id="KW-0813">Transport</keyword>
<keyword id="KW-0862">Zinc</keyword>
<reference key="1">
    <citation type="submission" date="2007-02" db="EMBL/GenBank/DDBJ databases">
        <title>Complete sequence of chromosome of Shewanella baltica OS155.</title>
        <authorList>
            <consortium name="US DOE Joint Genome Institute"/>
            <person name="Copeland A."/>
            <person name="Lucas S."/>
            <person name="Lapidus A."/>
            <person name="Barry K."/>
            <person name="Detter J.C."/>
            <person name="Glavina del Rio T."/>
            <person name="Hammon N."/>
            <person name="Israni S."/>
            <person name="Dalin E."/>
            <person name="Tice H."/>
            <person name="Pitluck S."/>
            <person name="Sims D.R."/>
            <person name="Brettin T."/>
            <person name="Bruce D."/>
            <person name="Han C."/>
            <person name="Tapia R."/>
            <person name="Brainard J."/>
            <person name="Schmutz J."/>
            <person name="Larimer F."/>
            <person name="Land M."/>
            <person name="Hauser L."/>
            <person name="Kyrpides N."/>
            <person name="Mikhailova N."/>
            <person name="Brettar I."/>
            <person name="Klappenbach J."/>
            <person name="Konstantinidis K."/>
            <person name="Rodrigues J."/>
            <person name="Tiedje J."/>
            <person name="Richardson P."/>
        </authorList>
    </citation>
    <scope>NUCLEOTIDE SEQUENCE [LARGE SCALE GENOMIC DNA]</scope>
    <source>
        <strain>OS155 / ATCC BAA-1091</strain>
    </source>
</reference>
<organism>
    <name type="scientific">Shewanella baltica (strain OS155 / ATCC BAA-1091)</name>
    <dbReference type="NCBI Taxonomy" id="325240"/>
    <lineage>
        <taxon>Bacteria</taxon>
        <taxon>Pseudomonadati</taxon>
        <taxon>Pseudomonadota</taxon>
        <taxon>Gammaproteobacteria</taxon>
        <taxon>Alteromonadales</taxon>
        <taxon>Shewanellaceae</taxon>
        <taxon>Shewanella</taxon>
    </lineage>
</organism>
<gene>
    <name evidence="1" type="primary">secA</name>
    <name type="ordered locus">Sbal_0410</name>
</gene>
<accession>A3CZM9</accession>
<protein>
    <recommendedName>
        <fullName evidence="1">Protein translocase subunit SecA</fullName>
        <ecNumber evidence="1">7.4.2.8</ecNumber>
    </recommendedName>
</protein>
<evidence type="ECO:0000255" key="1">
    <source>
        <dbReference type="HAMAP-Rule" id="MF_01382"/>
    </source>
</evidence>
<evidence type="ECO:0000256" key="2">
    <source>
        <dbReference type="SAM" id="MobiDB-lite"/>
    </source>
</evidence>
<name>SECA_SHEB5</name>
<feature type="chain" id="PRO_0000320990" description="Protein translocase subunit SecA">
    <location>
        <begin position="1"/>
        <end position="908"/>
    </location>
</feature>
<feature type="region of interest" description="Disordered" evidence="2">
    <location>
        <begin position="860"/>
        <end position="908"/>
    </location>
</feature>
<feature type="compositionally biased region" description="Basic residues" evidence="2">
    <location>
        <begin position="898"/>
        <end position="908"/>
    </location>
</feature>
<feature type="binding site" evidence="1">
    <location>
        <position position="87"/>
    </location>
    <ligand>
        <name>ATP</name>
        <dbReference type="ChEBI" id="CHEBI:30616"/>
    </ligand>
</feature>
<feature type="binding site" evidence="1">
    <location>
        <begin position="105"/>
        <end position="109"/>
    </location>
    <ligand>
        <name>ATP</name>
        <dbReference type="ChEBI" id="CHEBI:30616"/>
    </ligand>
</feature>
<feature type="binding site" evidence="1">
    <location>
        <position position="512"/>
    </location>
    <ligand>
        <name>ATP</name>
        <dbReference type="ChEBI" id="CHEBI:30616"/>
    </ligand>
</feature>
<feature type="binding site" evidence="1">
    <location>
        <position position="892"/>
    </location>
    <ligand>
        <name>Zn(2+)</name>
        <dbReference type="ChEBI" id="CHEBI:29105"/>
    </ligand>
</feature>
<feature type="binding site" evidence="1">
    <location>
        <position position="894"/>
    </location>
    <ligand>
        <name>Zn(2+)</name>
        <dbReference type="ChEBI" id="CHEBI:29105"/>
    </ligand>
</feature>
<feature type="binding site" evidence="1">
    <location>
        <position position="903"/>
    </location>
    <ligand>
        <name>Zn(2+)</name>
        <dbReference type="ChEBI" id="CHEBI:29105"/>
    </ligand>
</feature>
<feature type="binding site" evidence="1">
    <location>
        <position position="904"/>
    </location>
    <ligand>
        <name>Zn(2+)</name>
        <dbReference type="ChEBI" id="CHEBI:29105"/>
    </ligand>
</feature>